<proteinExistence type="evidence at transcript level"/>
<accession>Q08DC7</accession>
<dbReference type="EMBL" id="BC123821">
    <property type="protein sequence ID" value="AAI23822.1"/>
    <property type="molecule type" value="mRNA"/>
</dbReference>
<dbReference type="RefSeq" id="NP_001070383.1">
    <property type="nucleotide sequence ID" value="NM_001076915.1"/>
</dbReference>
<dbReference type="RefSeq" id="XP_024856530.1">
    <property type="nucleotide sequence ID" value="XM_025000762.2"/>
</dbReference>
<dbReference type="RefSeq" id="XP_024856531.1">
    <property type="nucleotide sequence ID" value="XM_025000763.2"/>
</dbReference>
<dbReference type="BMRB" id="Q08DC7"/>
<dbReference type="SMR" id="Q08DC7"/>
<dbReference type="FunCoup" id="Q08DC7">
    <property type="interactions" value="1141"/>
</dbReference>
<dbReference type="STRING" id="9913.ENSBTAP00000070617"/>
<dbReference type="PaxDb" id="9913-ENSBTAP00000050801"/>
<dbReference type="Ensembl" id="ENSBTAT00000054910.3">
    <property type="protein sequence ID" value="ENSBTAP00000050801.2"/>
    <property type="gene ID" value="ENSBTAG00000021837.7"/>
</dbReference>
<dbReference type="GeneID" id="539036"/>
<dbReference type="KEGG" id="bta:539036"/>
<dbReference type="CTD" id="10287"/>
<dbReference type="VEuPathDB" id="HostDB:ENSBTAG00000021837"/>
<dbReference type="VGNC" id="VGNC:33918">
    <property type="gene designation" value="RGS19"/>
</dbReference>
<dbReference type="eggNOG" id="KOG3589">
    <property type="taxonomic scope" value="Eukaryota"/>
</dbReference>
<dbReference type="GeneTree" id="ENSGT00940000160391"/>
<dbReference type="HOGENOM" id="CLU_059863_0_2_1"/>
<dbReference type="InParanoid" id="Q08DC7"/>
<dbReference type="OMA" id="EANQHMV"/>
<dbReference type="OrthoDB" id="10266999at2759"/>
<dbReference type="TreeFam" id="TF315837"/>
<dbReference type="Reactome" id="R-BTA-416476">
    <property type="pathway name" value="G alpha (q) signalling events"/>
</dbReference>
<dbReference type="Reactome" id="R-BTA-418594">
    <property type="pathway name" value="G alpha (i) signalling events"/>
</dbReference>
<dbReference type="Proteomes" id="UP000009136">
    <property type="component" value="Chromosome 13"/>
</dbReference>
<dbReference type="Bgee" id="ENSBTAG00000021837">
    <property type="expression patterns" value="Expressed in neutrophil and 103 other cell types or tissues"/>
</dbReference>
<dbReference type="GO" id="GO:0016020">
    <property type="term" value="C:membrane"/>
    <property type="evidence" value="ECO:0007669"/>
    <property type="project" value="UniProtKB-SubCell"/>
</dbReference>
<dbReference type="GO" id="GO:0006914">
    <property type="term" value="P:autophagy"/>
    <property type="evidence" value="ECO:0007669"/>
    <property type="project" value="UniProtKB-KW"/>
</dbReference>
<dbReference type="GO" id="GO:0009968">
    <property type="term" value="P:negative regulation of signal transduction"/>
    <property type="evidence" value="ECO:0007669"/>
    <property type="project" value="UniProtKB-KW"/>
</dbReference>
<dbReference type="FunFam" id="1.10.167.10:FF:000001">
    <property type="entry name" value="Putative regulator of g-protein signaling 12"/>
    <property type="match status" value="1"/>
</dbReference>
<dbReference type="FunFam" id="1.10.196.10:FF:000001">
    <property type="entry name" value="Regulator of G-protein signaling 8"/>
    <property type="match status" value="1"/>
</dbReference>
<dbReference type="Gene3D" id="1.10.196.10">
    <property type="match status" value="2"/>
</dbReference>
<dbReference type="Gene3D" id="1.10.167.10">
    <property type="entry name" value="Regulator of G-protein Signalling 4, domain 2"/>
    <property type="match status" value="1"/>
</dbReference>
<dbReference type="InterPro" id="IPR016137">
    <property type="entry name" value="RGS"/>
</dbReference>
<dbReference type="InterPro" id="IPR036305">
    <property type="entry name" value="RGS_sf"/>
</dbReference>
<dbReference type="InterPro" id="IPR024066">
    <property type="entry name" value="RGS_subdom1/3"/>
</dbReference>
<dbReference type="InterPro" id="IPR044926">
    <property type="entry name" value="RGS_subdomain_2"/>
</dbReference>
<dbReference type="PANTHER" id="PTHR10845">
    <property type="entry name" value="REGULATOR OF G PROTEIN SIGNALING"/>
    <property type="match status" value="1"/>
</dbReference>
<dbReference type="PANTHER" id="PTHR10845:SF145">
    <property type="entry name" value="REGULATOR OF G-PROTEIN SIGNALING 19"/>
    <property type="match status" value="1"/>
</dbReference>
<dbReference type="Pfam" id="PF00615">
    <property type="entry name" value="RGS"/>
    <property type="match status" value="1"/>
</dbReference>
<dbReference type="PRINTS" id="PR01301">
    <property type="entry name" value="RGSPROTEIN"/>
</dbReference>
<dbReference type="SMART" id="SM00315">
    <property type="entry name" value="RGS"/>
    <property type="match status" value="1"/>
</dbReference>
<dbReference type="SUPFAM" id="SSF48097">
    <property type="entry name" value="Regulator of G-protein signaling, RGS"/>
    <property type="match status" value="1"/>
</dbReference>
<dbReference type="PROSITE" id="PS50132">
    <property type="entry name" value="RGS"/>
    <property type="match status" value="1"/>
</dbReference>
<organism>
    <name type="scientific">Bos taurus</name>
    <name type="common">Bovine</name>
    <dbReference type="NCBI Taxonomy" id="9913"/>
    <lineage>
        <taxon>Eukaryota</taxon>
        <taxon>Metazoa</taxon>
        <taxon>Chordata</taxon>
        <taxon>Craniata</taxon>
        <taxon>Vertebrata</taxon>
        <taxon>Euteleostomi</taxon>
        <taxon>Mammalia</taxon>
        <taxon>Eutheria</taxon>
        <taxon>Laurasiatheria</taxon>
        <taxon>Artiodactyla</taxon>
        <taxon>Ruminantia</taxon>
        <taxon>Pecora</taxon>
        <taxon>Bovidae</taxon>
        <taxon>Bovinae</taxon>
        <taxon>Bos</taxon>
    </lineage>
</organism>
<comment type="function">
    <text evidence="1">Inhibits signal transduction by increasing the GTPase activity of G protein alpha subunits thereby driving them into their inactive GDP-bound form. Binds to G-alpha subfamily 1 members, with the order G(i)a3 &gt; G(i)a1 &gt; G(o)a &gt;&gt; G(z)a/G(i)a2. Activity on G(z)-alpha is inhibited by phosphorylation and palmitoylation of the G-protein (By similarity).</text>
</comment>
<comment type="subunit">
    <text evidence="3">Interacts with GIPC PDZ domain. Interacts with GNAO1.</text>
</comment>
<comment type="subcellular location">
    <subcellularLocation>
        <location evidence="1">Membrane</location>
        <topology evidence="1">Lipid-anchor</topology>
    </subcellularLocation>
</comment>
<comment type="PTM">
    <text evidence="1">Fatty acylated. Heavily palmitoylated in the cysteine string motif (By similarity).</text>
</comment>
<comment type="PTM">
    <text evidence="1">Phosphorylated, mainly on serine residues.</text>
</comment>
<gene>
    <name type="primary">RGS19</name>
</gene>
<protein>
    <recommendedName>
        <fullName>Regulator of G-protein signaling 19</fullName>
        <shortName>RGS19</shortName>
    </recommendedName>
</protein>
<reference key="1">
    <citation type="submission" date="2006-09" db="EMBL/GenBank/DDBJ databases">
        <authorList>
            <consortium name="NIH - Mammalian Gene Collection (MGC) project"/>
        </authorList>
    </citation>
    <scope>NUCLEOTIDE SEQUENCE [LARGE SCALE MRNA]</scope>
    <source>
        <strain>Hereford</strain>
        <tissue>Thalamus</tissue>
    </source>
</reference>
<feature type="chain" id="PRO_0000284971" description="Regulator of G-protein signaling 19">
    <location>
        <begin position="1"/>
        <end position="223"/>
    </location>
</feature>
<feature type="domain" description="RGS" evidence="4">
    <location>
        <begin position="96"/>
        <end position="212"/>
    </location>
</feature>
<feature type="region of interest" description="Disordered" evidence="5">
    <location>
        <begin position="1"/>
        <end position="30"/>
    </location>
</feature>
<feature type="region of interest" description="Interaction with GIPC" evidence="1">
    <location>
        <begin position="213"/>
        <end position="223"/>
    </location>
</feature>
<feature type="compositionally biased region" description="Low complexity" evidence="5">
    <location>
        <begin position="20"/>
        <end position="29"/>
    </location>
</feature>
<feature type="modified residue" description="Phosphoserine" evidence="2">
    <location>
        <position position="24"/>
    </location>
</feature>
<feature type="modified residue" description="Phosphoserine" evidence="3">
    <location>
        <position position="103"/>
    </location>
</feature>
<feature type="modified residue" description="Phosphoserine; by MAPK1 and MAPK3" evidence="3">
    <location>
        <position position="157"/>
    </location>
</feature>
<sequence length="223" mass="25353">MPTPPEAEKQQTGPEEADQPPSMSSHDAAPPAPPRRNPCCLCWCCCCSCSWNEERRRAWRASRESRLQPLPSCEVCATPTPTPTPTPEEVRSWAQSFDKLMHSPAGRSVFREFLRTEYSEENMLFWLACEELKAEANQHVVDEKARLIYEDYVSILSPKEVSLDSRVREGINKKMQEPSAHTFDDAQLQIYTLMHRDSYPRFLSSPAYRALLLQGASQSSSEA</sequence>
<evidence type="ECO:0000250" key="1"/>
<evidence type="ECO:0000250" key="2">
    <source>
        <dbReference type="UniProtKB" id="O70521"/>
    </source>
</evidence>
<evidence type="ECO:0000250" key="3">
    <source>
        <dbReference type="UniProtKB" id="P49795"/>
    </source>
</evidence>
<evidence type="ECO:0000255" key="4">
    <source>
        <dbReference type="PROSITE-ProRule" id="PRU00171"/>
    </source>
</evidence>
<evidence type="ECO:0000256" key="5">
    <source>
        <dbReference type="SAM" id="MobiDB-lite"/>
    </source>
</evidence>
<name>RGS19_BOVIN</name>
<keyword id="KW-0072">Autophagy</keyword>
<keyword id="KW-0449">Lipoprotein</keyword>
<keyword id="KW-0472">Membrane</keyword>
<keyword id="KW-0564">Palmitate</keyword>
<keyword id="KW-0597">Phosphoprotein</keyword>
<keyword id="KW-1185">Reference proteome</keyword>
<keyword id="KW-0734">Signal transduction inhibitor</keyword>